<comment type="function">
    <text evidence="13">Functions as a molecular adapter coordinating multiple protein-protein interactions at the focal adhesion complex and in the nucleus. Links various intracellular signaling modules to plasma membrane receptors and regulates the Wnt and TGFB signaling pathways. May also regulate SLC6A3 and SLC6A4 targeting to the plasma membrane hence regulating their activity. In the nucleus, functions as a nuclear receptor coactivator regulating glucocorticoid, androgen, mineralocorticoid and progesterone receptor transcriptional activity. May play a role in the processes of cell growth, proliferation, migration, differentiation and senescence. May have a zinc-dependent DNA-binding activity.</text>
</comment>
<comment type="subunit">
    <text evidence="2 3 6 7 8 9 11 12">Homooligomer (By similarity). Interacts with PPARG (By similarity). Interacts with TRAF4 (By similarity). Interacts with CRIP2 (By similarity). Interacts with HSPB1 (PubMed:11546764). Interacts with ILK (By similarity). Interacts with LIMS1 and LIMS2 (By similarity). Interacts with NCK2 (PubMed:10330411). Interacts with NUDT16L1 (By similarity). Interacts with PAK (PubMed:10330411). Interacts with PTPN12 (By similarity). Interacts with TCF3 (By similarity). Interacts with TCF7L2 (By similarity). Interacts with VCL (By similarity). Interacts (via LD motif 3) with GIT1 (PubMed:12153727). Also interacts with GIT2 (PubMed:10330411). Forms a complex with ARHGEF7 (PubMed:10330411). Interacts with AR/androgen receptor in a ligand-dependent manner (By similarity). Interacts with CSK (By similarity). Interacts with PTK2/FAK1 and PTK2B/PYK2 (PubMed:10330411, PubMed:16546139, PubMed:9422762). Interacts with SLC6A3 and SLC6A4 (By similarity). Interacts with NR3C1 (By similarity). Interacts with SMAD3 (By similarity). Interacts with MAPK15 (By similarity). Interacts with SRC (By similarity). Interacts with LYN (By similarity). Interacts with talin (By similarity). Interacts (via LIM zinc-binding domain 2) with CBLC (via RING-type zinc finger); the interaction is direct and enhances CBLC E3 ubiquitin-protein ligase activity (By similarity). Interacts with PARVA (PubMed:11134073). Interacts with PXN (PubMed:16546139).</text>
</comment>
<comment type="subcellular location">
    <subcellularLocation>
        <location>Cell junction</location>
        <location>Focal adhesion</location>
    </subcellularLocation>
    <subcellularLocation>
        <location>Nucleus matrix</location>
    </subcellularLocation>
    <subcellularLocation>
        <location>Cytoplasm</location>
        <location>Cytoskeleton</location>
    </subcellularLocation>
    <text>Associated with the actin cytoskeleton, colocalizes with stress fibers.</text>
</comment>
<comment type="tissue specificity">
    <text evidence="8 10">Strongly expressed in large intestine, lung, spleen, testis, uterus and to a lower extent in brain, kidney and liver (at protein level). In brain, expressed by neuronal and non neuronal cells (at protein level).</text>
</comment>
<comment type="induction">
    <text evidence="13">Up-regulated by retinoic acid.</text>
</comment>
<comment type="domain">
    <text evidence="1">The LIM zinc-binding domains mediate glucocorticoid receptor coactivation and interaction with AR, CRIP2, ILK, LIMS1, NR3C1, PPARG, TCF3, TCF7L2, SLC6A3 and SMAD3. The LIM zinc-binding 2 and LIM zinc-binding 3 domains mediate targeting to focal adhesions and actin stress fibers. The LIM zinc-binding 3 and LIM zinc-binding 4 domains mediate interaction with TRAF4 and MAPK15. The LIM zinc-binding 4 domain mediates interaction with HSPB1, homooligomerization and targeting to the nuclear matrix. The LIM zinc-binding 3 domain mediates interaction with PTPN12 (By similarity).</text>
</comment>
<comment type="domain">
    <text evidence="1">The LD (leucine and aspartate-rich) motif 3 mediates interaction with GIT1 and functions as a nuclear export signal.</text>
</comment>
<comment type="PTM">
    <text evidence="1">Phosphorylated by gonadotropin-releasing hormone-activated SRC.</text>
</comment>
<comment type="similarity">
    <text evidence="14">Belongs to the paxillin family.</text>
</comment>
<dbReference type="EMBL" id="CV078574">
    <property type="status" value="NOT_ANNOTATED_CDS"/>
    <property type="molecule type" value="mRNA"/>
</dbReference>
<dbReference type="EMBL" id="AF314960">
    <property type="protein sequence ID" value="AAK01175.1"/>
    <property type="molecule type" value="mRNA"/>
</dbReference>
<dbReference type="RefSeq" id="NP_001178769.1">
    <property type="nucleotide sequence ID" value="NM_001191840.1"/>
</dbReference>
<dbReference type="SMR" id="Q99PD6"/>
<dbReference type="CORUM" id="Q99PD6"/>
<dbReference type="FunCoup" id="Q99PD6">
    <property type="interactions" value="240"/>
</dbReference>
<dbReference type="STRING" id="10116.ENSRNOP00000051863"/>
<dbReference type="iPTMnet" id="Q99PD6"/>
<dbReference type="PhosphoSitePlus" id="Q99PD6"/>
<dbReference type="PaxDb" id="10116-ENSRNOP00000051863"/>
<dbReference type="GeneID" id="84574"/>
<dbReference type="KEGG" id="rno:84574"/>
<dbReference type="UCSC" id="RGD:620173">
    <property type="organism name" value="rat"/>
</dbReference>
<dbReference type="AGR" id="RGD:620173"/>
<dbReference type="CTD" id="7041"/>
<dbReference type="RGD" id="620173">
    <property type="gene designation" value="Tgfb1i1"/>
</dbReference>
<dbReference type="VEuPathDB" id="HostDB:ENSRNOG00000019965"/>
<dbReference type="eggNOG" id="KOG1703">
    <property type="taxonomic scope" value="Eukaryota"/>
</dbReference>
<dbReference type="HOGENOM" id="CLU_001357_1_2_1"/>
<dbReference type="InParanoid" id="Q99PD6"/>
<dbReference type="PhylomeDB" id="Q99PD6"/>
<dbReference type="PRO" id="PR:Q99PD6"/>
<dbReference type="Proteomes" id="UP000002494">
    <property type="component" value="Chromosome 1"/>
</dbReference>
<dbReference type="Bgee" id="ENSRNOG00000019965">
    <property type="expression patterns" value="Expressed in colon and 20 other cell types or tissues"/>
</dbReference>
<dbReference type="GO" id="GO:0005737">
    <property type="term" value="C:cytoplasm"/>
    <property type="evidence" value="ECO:0007669"/>
    <property type="project" value="UniProtKB-KW"/>
</dbReference>
<dbReference type="GO" id="GO:0005856">
    <property type="term" value="C:cytoskeleton"/>
    <property type="evidence" value="ECO:0007669"/>
    <property type="project" value="UniProtKB-SubCell"/>
</dbReference>
<dbReference type="GO" id="GO:0005925">
    <property type="term" value="C:focal adhesion"/>
    <property type="evidence" value="ECO:0000266"/>
    <property type="project" value="RGD"/>
</dbReference>
<dbReference type="GO" id="GO:0016363">
    <property type="term" value="C:nuclear matrix"/>
    <property type="evidence" value="ECO:0007669"/>
    <property type="project" value="UniProtKB-SubCell"/>
</dbReference>
<dbReference type="GO" id="GO:0070411">
    <property type="term" value="F:I-SMAD binding"/>
    <property type="evidence" value="ECO:0000353"/>
    <property type="project" value="BHF-UCL"/>
</dbReference>
<dbReference type="GO" id="GO:0046872">
    <property type="term" value="F:metal ion binding"/>
    <property type="evidence" value="ECO:0007669"/>
    <property type="project" value="UniProtKB-KW"/>
</dbReference>
<dbReference type="GO" id="GO:0050681">
    <property type="term" value="F:nuclear androgen receptor binding"/>
    <property type="evidence" value="ECO:0000266"/>
    <property type="project" value="RGD"/>
</dbReference>
<dbReference type="GO" id="GO:0048495">
    <property type="term" value="F:Roundabout binding"/>
    <property type="evidence" value="ECO:0000266"/>
    <property type="project" value="RGD"/>
</dbReference>
<dbReference type="GO" id="GO:0003713">
    <property type="term" value="F:transcription coactivator activity"/>
    <property type="evidence" value="ECO:0000250"/>
    <property type="project" value="UniProtKB"/>
</dbReference>
<dbReference type="GO" id="GO:0045165">
    <property type="term" value="P:cell fate commitment"/>
    <property type="evidence" value="ECO:0000266"/>
    <property type="project" value="RGD"/>
</dbReference>
<dbReference type="GO" id="GO:0030855">
    <property type="term" value="P:epithelial cell differentiation"/>
    <property type="evidence" value="ECO:0000266"/>
    <property type="project" value="RGD"/>
</dbReference>
<dbReference type="GO" id="GO:0045444">
    <property type="term" value="P:fat cell differentiation"/>
    <property type="evidence" value="ECO:0000266"/>
    <property type="project" value="RGD"/>
</dbReference>
<dbReference type="GO" id="GO:0016331">
    <property type="term" value="P:morphogenesis of embryonic epithelium"/>
    <property type="evidence" value="ECO:0000266"/>
    <property type="project" value="RGD"/>
</dbReference>
<dbReference type="GO" id="GO:0045599">
    <property type="term" value="P:negative regulation of fat cell differentiation"/>
    <property type="evidence" value="ECO:0000266"/>
    <property type="project" value="RGD"/>
</dbReference>
<dbReference type="GO" id="GO:0045893">
    <property type="term" value="P:positive regulation of DNA-templated transcription"/>
    <property type="evidence" value="ECO:0000266"/>
    <property type="project" value="RGD"/>
</dbReference>
<dbReference type="GO" id="GO:0010718">
    <property type="term" value="P:positive regulation of epithelial to mesenchymal transition"/>
    <property type="evidence" value="ECO:0000266"/>
    <property type="project" value="RGD"/>
</dbReference>
<dbReference type="GO" id="GO:0030511">
    <property type="term" value="P:positive regulation of transforming growth factor beta receptor signaling pathway"/>
    <property type="evidence" value="ECO:0000266"/>
    <property type="project" value="RGD"/>
</dbReference>
<dbReference type="GO" id="GO:2000060">
    <property type="term" value="P:positive regulation of ubiquitin-dependent protein catabolic process"/>
    <property type="evidence" value="ECO:0000266"/>
    <property type="project" value="RGD"/>
</dbReference>
<dbReference type="GO" id="GO:0016055">
    <property type="term" value="P:Wnt signaling pathway"/>
    <property type="evidence" value="ECO:0007669"/>
    <property type="project" value="UniProtKB-KW"/>
</dbReference>
<dbReference type="CDD" id="cd09336">
    <property type="entry name" value="LIM1_Paxillin_like"/>
    <property type="match status" value="1"/>
</dbReference>
<dbReference type="CDD" id="cd09337">
    <property type="entry name" value="LIM2_Paxillin_like"/>
    <property type="match status" value="1"/>
</dbReference>
<dbReference type="CDD" id="cd09409">
    <property type="entry name" value="LIM3_Paxillin"/>
    <property type="match status" value="1"/>
</dbReference>
<dbReference type="CDD" id="cd09412">
    <property type="entry name" value="LIM4_Leupaxin"/>
    <property type="match status" value="1"/>
</dbReference>
<dbReference type="FunFam" id="2.10.110.10:FF:000008">
    <property type="entry name" value="Paxillin isoform 1"/>
    <property type="match status" value="1"/>
</dbReference>
<dbReference type="FunFam" id="2.10.110.10:FF:000009">
    <property type="entry name" value="Paxillin isoform 1"/>
    <property type="match status" value="1"/>
</dbReference>
<dbReference type="FunFam" id="2.10.110.10:FF:000012">
    <property type="entry name" value="Paxillin isoform 1"/>
    <property type="match status" value="1"/>
</dbReference>
<dbReference type="FunFam" id="2.10.110.10:FF:000018">
    <property type="entry name" value="Paxillin isoform 1"/>
    <property type="match status" value="1"/>
</dbReference>
<dbReference type="Gene3D" id="2.10.110.10">
    <property type="entry name" value="Cysteine Rich Protein"/>
    <property type="match status" value="4"/>
</dbReference>
<dbReference type="InterPro" id="IPR047075">
    <property type="entry name" value="Paxillin_TGFB1I1_LIM_dom1"/>
</dbReference>
<dbReference type="InterPro" id="IPR050604">
    <property type="entry name" value="PDZ-LIM_domain"/>
</dbReference>
<dbReference type="InterPro" id="IPR017305">
    <property type="entry name" value="Tgfb1i1/Leupaxin/TGFB1I1"/>
</dbReference>
<dbReference type="InterPro" id="IPR001781">
    <property type="entry name" value="Znf_LIM"/>
</dbReference>
<dbReference type="PANTHER" id="PTHR24214:SF62">
    <property type="entry name" value="LEUPAXIN"/>
    <property type="match status" value="1"/>
</dbReference>
<dbReference type="PANTHER" id="PTHR24214">
    <property type="entry name" value="PDZ AND LIM DOMAIN PROTEIN ZASP"/>
    <property type="match status" value="1"/>
</dbReference>
<dbReference type="Pfam" id="PF00412">
    <property type="entry name" value="LIM"/>
    <property type="match status" value="4"/>
</dbReference>
<dbReference type="Pfam" id="PF03535">
    <property type="entry name" value="Paxillin"/>
    <property type="match status" value="1"/>
</dbReference>
<dbReference type="PIRSF" id="PIRSF037881">
    <property type="entry name" value="Leupaxin"/>
    <property type="match status" value="1"/>
</dbReference>
<dbReference type="SMART" id="SM00132">
    <property type="entry name" value="LIM"/>
    <property type="match status" value="4"/>
</dbReference>
<dbReference type="SUPFAM" id="SSF57716">
    <property type="entry name" value="Glucocorticoid receptor-like (DNA-binding domain)"/>
    <property type="match status" value="5"/>
</dbReference>
<dbReference type="PROSITE" id="PS00478">
    <property type="entry name" value="LIM_DOMAIN_1"/>
    <property type="match status" value="4"/>
</dbReference>
<dbReference type="PROSITE" id="PS50023">
    <property type="entry name" value="LIM_DOMAIN_2"/>
    <property type="match status" value="4"/>
</dbReference>
<evidence type="ECO:0000250" key="1"/>
<evidence type="ECO:0000250" key="2">
    <source>
        <dbReference type="UniProtKB" id="O43294"/>
    </source>
</evidence>
<evidence type="ECO:0000250" key="3">
    <source>
        <dbReference type="UniProtKB" id="Q62219"/>
    </source>
</evidence>
<evidence type="ECO:0000255" key="4">
    <source>
        <dbReference type="PROSITE-ProRule" id="PRU00125"/>
    </source>
</evidence>
<evidence type="ECO:0000256" key="5">
    <source>
        <dbReference type="SAM" id="MobiDB-lite"/>
    </source>
</evidence>
<evidence type="ECO:0000269" key="6">
    <source>
    </source>
</evidence>
<evidence type="ECO:0000269" key="7">
    <source>
    </source>
</evidence>
<evidence type="ECO:0000269" key="8">
    <source>
    </source>
</evidence>
<evidence type="ECO:0000269" key="9">
    <source>
    </source>
</evidence>
<evidence type="ECO:0000269" key="10">
    <source>
    </source>
</evidence>
<evidence type="ECO:0000269" key="11">
    <source>
    </source>
</evidence>
<evidence type="ECO:0000269" key="12">
    <source>
    </source>
</evidence>
<evidence type="ECO:0000269" key="13">
    <source>
    </source>
</evidence>
<evidence type="ECO:0000305" key="14"/>
<evidence type="ECO:0007744" key="15">
    <source>
    </source>
</evidence>
<organism>
    <name type="scientific">Rattus norvegicus</name>
    <name type="common">Rat</name>
    <dbReference type="NCBI Taxonomy" id="10116"/>
    <lineage>
        <taxon>Eukaryota</taxon>
        <taxon>Metazoa</taxon>
        <taxon>Chordata</taxon>
        <taxon>Craniata</taxon>
        <taxon>Vertebrata</taxon>
        <taxon>Euteleostomi</taxon>
        <taxon>Mammalia</taxon>
        <taxon>Eutheria</taxon>
        <taxon>Euarchontoglires</taxon>
        <taxon>Glires</taxon>
        <taxon>Rodentia</taxon>
        <taxon>Myomorpha</taxon>
        <taxon>Muroidea</taxon>
        <taxon>Muridae</taxon>
        <taxon>Murinae</taxon>
        <taxon>Rattus</taxon>
    </lineage>
</organism>
<accession>Q99PD6</accession>
<proteinExistence type="evidence at protein level"/>
<sequence length="461" mass="50123">MEDLDALLSDLETTTSHMSRLGAPKERPPETLTPPPPYGHQPQTGSGESSGASGDKDHLYSTVCKPRSPKSVAPVAPPFSSSSGVLGNGLCELDRLLQELNATQFNITDEIMSQFPSSKMAEGEGKEDQSEDKSITTVPSSTFPAPSKPSATSATQELDRLMASLSDFRVQNHLPASGPPQPPAVSPTREGCPSPPGQTNKGSLDTMLGLLQSDLSRRGVPTQAKGLCGSCNKPIAGQVVTALGRAWHPEHFLCRGCSTTLGGSSFFEKDGAPFCPECYFERFSPRCGFCNQPIRHKMVTALGTHWHPEHFCCVSCGEPFGEEGFHEREGRPYCRRDFLQLFAPRCQGCQGPILDNYISALSALWHPDCFVCRECLAPFSGGSFFEHEGRPLCENHFHAQRGSLCATCGLPVTGRCVSALGRRFHPDHFTCTFCLRPLTKGSFQERASKPYCQPCFLKLFG</sequence>
<protein>
    <recommendedName>
        <fullName>Transforming growth factor beta-1-induced transcript 1 protein</fullName>
    </recommendedName>
    <alternativeName>
        <fullName>Androgen receptor-associated protein of 55 kDa</fullName>
    </alternativeName>
    <alternativeName>
        <fullName>Hydrogen peroxide-inducible clone 5 protein</fullName>
        <shortName>Hic-5</shortName>
    </alternativeName>
</protein>
<feature type="chain" id="PRO_0000291584" description="Transforming growth factor beta-1-induced transcript 1 protein">
    <location>
        <begin position="1"/>
        <end position="461"/>
    </location>
</feature>
<feature type="domain" description="LIM zinc-binding 1" evidence="4">
    <location>
        <begin position="226"/>
        <end position="285"/>
    </location>
</feature>
<feature type="domain" description="LIM zinc-binding 2" evidence="4">
    <location>
        <begin position="286"/>
        <end position="343"/>
    </location>
</feature>
<feature type="domain" description="LIM zinc-binding 3" evidence="4">
    <location>
        <begin position="344"/>
        <end position="403"/>
    </location>
</feature>
<feature type="domain" description="LIM zinc-binding 4" evidence="4">
    <location>
        <begin position="404"/>
        <end position="461"/>
    </location>
</feature>
<feature type="region of interest" description="Interaction with PTK2B/PYK2" evidence="1">
    <location>
        <begin position="1"/>
        <end position="240"/>
    </location>
</feature>
<feature type="region of interest" description="Transcription activation" evidence="1">
    <location>
        <begin position="1"/>
        <end position="200"/>
    </location>
</feature>
<feature type="region of interest" description="Disordered" evidence="5">
    <location>
        <begin position="1"/>
        <end position="86"/>
    </location>
</feature>
<feature type="region of interest" description="Interaction with PTK2/FAK1" evidence="1">
    <location>
        <begin position="83"/>
        <end position="136"/>
    </location>
</feature>
<feature type="region of interest" description="Disordered" evidence="5">
    <location>
        <begin position="116"/>
        <end position="154"/>
    </location>
</feature>
<feature type="region of interest" description="Disordered" evidence="5">
    <location>
        <begin position="171"/>
        <end position="204"/>
    </location>
</feature>
<feature type="short sequence motif" description="LD motif 1">
    <location>
        <begin position="3"/>
        <end position="15"/>
    </location>
</feature>
<feature type="short sequence motif" description="LD motif 2">
    <location>
        <begin position="92"/>
        <end position="104"/>
    </location>
</feature>
<feature type="short sequence motif" description="LD motif 3">
    <location>
        <begin position="157"/>
        <end position="168"/>
    </location>
</feature>
<feature type="short sequence motif" description="LD motif 4">
    <location>
        <begin position="203"/>
        <end position="215"/>
    </location>
</feature>
<feature type="compositionally biased region" description="Polar residues" evidence="5">
    <location>
        <begin position="41"/>
        <end position="52"/>
    </location>
</feature>
<feature type="compositionally biased region" description="Low complexity" evidence="5">
    <location>
        <begin position="69"/>
        <end position="83"/>
    </location>
</feature>
<feature type="compositionally biased region" description="Basic and acidic residues" evidence="5">
    <location>
        <begin position="121"/>
        <end position="134"/>
    </location>
</feature>
<feature type="compositionally biased region" description="Polar residues" evidence="5">
    <location>
        <begin position="135"/>
        <end position="154"/>
    </location>
</feature>
<feature type="modified residue" description="N-acetylmethionine" evidence="2">
    <location>
        <position position="1"/>
    </location>
</feature>
<feature type="modified residue" description="Phosphothreonine" evidence="15">
    <location>
        <position position="33"/>
    </location>
</feature>
<feature type="modified residue" description="Phosphotyrosine" evidence="3">
    <location>
        <position position="38"/>
    </location>
</feature>
<feature type="modified residue" description="Phosphotyrosine; by FAK2 and FYN" evidence="2">
    <location>
        <position position="60"/>
    </location>
</feature>
<feature type="modified residue" description="Phosphoserine" evidence="2">
    <location>
        <position position="68"/>
    </location>
</feature>
<feature type="modified residue" description="Phosphoserine" evidence="2">
    <location>
        <position position="140"/>
    </location>
</feature>
<feature type="modified residue" description="Phosphoserine" evidence="2">
    <location>
        <position position="141"/>
    </location>
</feature>
<feature type="modified residue" description="Phosphoserine" evidence="2">
    <location>
        <position position="164"/>
    </location>
</feature>
<feature type="modified residue" description="Phosphoserine" evidence="3">
    <location>
        <position position="186"/>
    </location>
</feature>
<feature type="modified residue" description="Phosphothreonine" evidence="3">
    <location>
        <position position="188"/>
    </location>
</feature>
<feature type="modified residue" description="Phosphoserine" evidence="2">
    <location>
        <position position="194"/>
    </location>
</feature>
<feature type="modified residue" description="Phosphoserine" evidence="2">
    <location>
        <position position="403"/>
    </location>
</feature>
<feature type="modified residue" description="Phosphothreonine" evidence="2">
    <location>
        <position position="407"/>
    </location>
</feature>
<name>TGFI1_RAT</name>
<gene>
    <name type="primary">Tgfb1i1</name>
    <name type="synonym">Ara55</name>
</gene>
<keyword id="KW-0007">Acetylation</keyword>
<keyword id="KW-0010">Activator</keyword>
<keyword id="KW-0965">Cell junction</keyword>
<keyword id="KW-0963">Cytoplasm</keyword>
<keyword id="KW-0206">Cytoskeleton</keyword>
<keyword id="KW-0221">Differentiation</keyword>
<keyword id="KW-0440">LIM domain</keyword>
<keyword id="KW-0479">Metal-binding</keyword>
<keyword id="KW-0539">Nucleus</keyword>
<keyword id="KW-0597">Phosphoprotein</keyword>
<keyword id="KW-1185">Reference proteome</keyword>
<keyword id="KW-0677">Repeat</keyword>
<keyword id="KW-0879">Wnt signaling pathway</keyword>
<keyword id="KW-0862">Zinc</keyword>
<reference key="1">
    <citation type="journal article" date="2004" name="Genome Res.">
        <title>The status, quality, and expansion of the NIH full-length cDNA project: the Mammalian Gene Collection (MGC).</title>
        <authorList>
            <consortium name="The MGC Project Team"/>
        </authorList>
    </citation>
    <scope>NUCLEOTIDE SEQUENCE [LARGE SCALE MRNA] OF 1-224</scope>
    <source>
        <tissue>Thymus</tissue>
    </source>
</reference>
<reference key="2">
    <citation type="journal article" date="2001" name="J. Biol. Chem.">
        <title>Identification and characterization of hic-5/ARA55 as an hsp27 binding protein.</title>
        <authorList>
            <person name="Jia Y."/>
            <person name="Ransom R.F."/>
            <person name="Shibanuma M."/>
            <person name="Liu C."/>
            <person name="Welsh M.J."/>
            <person name="Smoyer W.E."/>
        </authorList>
    </citation>
    <scope>NUCLEOTIDE SEQUENCE [MRNA] OF 132-461</scope>
    <scope>INTERACTION WITH HSPB1</scope>
    <scope>TISSUE SPECIFICITY</scope>
    <source>
        <strain>Sprague-Dawley</strain>
        <tissue>Renal glomerulus</tissue>
    </source>
</reference>
<reference key="3">
    <citation type="journal article" date="1998" name="Int. J. Biochem. Cell Biol.">
        <title>Forced expression of hic-5, a senescence-related gene, potentiates a differentiation process of RCT-1 cells induced by retinoic acid.</title>
        <authorList>
            <person name="Shibanuma M."/>
            <person name="Nose K."/>
        </authorList>
    </citation>
    <scope>FUNCTION</scope>
    <scope>INDUCTION BY RETINOIC ACID</scope>
</reference>
<reference key="4">
    <citation type="journal article" date="1998" name="J. Biol. Chem.">
        <title>Cell adhesion kinase beta forms a complex with a new member, Hic-5, of proteins localized at focal adhesions.</title>
        <authorList>
            <person name="Matsuya M."/>
            <person name="Sasaki H."/>
            <person name="Aoto H."/>
            <person name="Mitaka T."/>
            <person name="Nagura K."/>
            <person name="Ohba T."/>
            <person name="Ishino M."/>
            <person name="Takahashi S."/>
            <person name="Suzuki R."/>
            <person name="Sasaki T."/>
        </authorList>
    </citation>
    <scope>SUBCELLULAR LOCATION</scope>
    <scope>PHOSPHORYLATION</scope>
    <scope>INTERACTION WITH PTK2 AND PTK2B</scope>
</reference>
<reference key="5">
    <citation type="journal article" date="1998" name="J. Biol. Chem.">
        <title>Interaction of Hic-5, A senescence-related protein, with focal adhesion kinase.</title>
        <authorList>
            <person name="Fujita H."/>
            <person name="Kamiguchi K."/>
            <person name="Cho D."/>
            <person name="Shibanuma M."/>
            <person name="Morimoto C."/>
            <person name="Tachibana K."/>
        </authorList>
    </citation>
    <scope>SUBCELLULAR LOCATION</scope>
</reference>
<reference key="6">
    <citation type="journal article" date="1999" name="J. Cell Biol.">
        <title>Paxillin LD4 motif binds PAK and PIX through a novel 95-kD ankyrin repeat, ARF-GAP protein: a role in cytoskeletal remodeling.</title>
        <authorList>
            <person name="Turner C.E."/>
            <person name="Brown M.C."/>
            <person name="Perrotta J.A."/>
            <person name="Riedy M.C."/>
            <person name="Nikolopoulos S.N."/>
            <person name="McDonald A.R."/>
            <person name="Bagrodia S."/>
            <person name="Thomas S.M."/>
            <person name="Leventhal P.S."/>
        </authorList>
    </citation>
    <scope>INTERACTION WITH ARHGEF7; GIT2; NCK2; PTK2 AND PAK</scope>
</reference>
<reference key="7">
    <citation type="journal article" date="2000" name="J. Cell Biol.">
        <title>Actopaxin, a new focal adhesion protein that binds paxillin LD motifs and actin and regulates cell adhesion.</title>
        <authorList>
            <person name="Nikolopoulos S.N."/>
            <person name="Turner C.E."/>
        </authorList>
    </citation>
    <scope>INTERACTION WITH PARVA</scope>
</reference>
<reference key="8">
    <citation type="journal article" date="2000" name="Mol. Biol. Cell">
        <title>Interaction of the tau2 transcriptional activation domain of glucocorticoid receptor with a novel steroid receptor coactivator, Hic-5, which localizes to both focal adhesions and the nuclear matrix.</title>
        <authorList>
            <person name="Yang L."/>
            <person name="Guerrero J."/>
            <person name="Hong H."/>
            <person name="DeFranco D.B."/>
            <person name="Stallcup M.R."/>
        </authorList>
    </citation>
    <scope>SUBCELLULAR LOCATION</scope>
</reference>
<reference key="9">
    <citation type="journal article" date="2002" name="J. Biochem.">
        <title>Hic-5 interacts with GIT1 with a different binding mode from paxillin.</title>
        <authorList>
            <person name="Nishiya N."/>
            <person name="Shirai T."/>
            <person name="Suzuki W."/>
            <person name="Nose K."/>
        </authorList>
    </citation>
    <scope>INTERACTION WITH GIT1</scope>
</reference>
<reference key="10">
    <citation type="journal article" date="2002" name="J. Neurosci.">
        <title>The multiple LIM domain-containing adaptor protein Hic-5 synaptically colocalizes and interacts with the dopamine transporter.</title>
        <authorList>
            <person name="Carneiro A.M.D."/>
            <person name="Ingram S.L."/>
            <person name="Beaulieu J.-M."/>
            <person name="Sweeney A."/>
            <person name="Amara S.G."/>
            <person name="Thomas S.M."/>
            <person name="Caron M.G."/>
            <person name="Torres G.E."/>
        </authorList>
    </citation>
    <scope>TISSUE SPECIFICITY</scope>
</reference>
<reference key="11">
    <citation type="journal article" date="2006" name="Biochem. Biophys. Res. Commun.">
        <title>Cyclic strain promotes shuttling of PYK2/Hic-5 complex from focal contacts in osteoblast-like cells.</title>
        <authorList>
            <person name="Guignandon A."/>
            <person name="Boutahar N."/>
            <person name="Rattner A."/>
            <person name="Vico L."/>
            <person name="Lafage-Proust M.-H."/>
        </authorList>
    </citation>
    <scope>SUBCELLULAR LOCATION</scope>
    <scope>PHOSPHORYLATION</scope>
    <scope>INTERACTION WITH PTK2B AND PXN</scope>
</reference>
<reference key="12">
    <citation type="journal article" date="2012" name="Nat. Commun.">
        <title>Quantitative maps of protein phosphorylation sites across 14 different rat organs and tissues.</title>
        <authorList>
            <person name="Lundby A."/>
            <person name="Secher A."/>
            <person name="Lage K."/>
            <person name="Nordsborg N.B."/>
            <person name="Dmytriyev A."/>
            <person name="Lundby C."/>
            <person name="Olsen J.V."/>
        </authorList>
    </citation>
    <scope>PHOSPHORYLATION [LARGE SCALE ANALYSIS] AT THR-33</scope>
    <scope>IDENTIFICATION BY MASS SPECTROMETRY [LARGE SCALE ANALYSIS]</scope>
</reference>